<dbReference type="EMBL" id="AJ785792">
    <property type="protein sequence ID" value="CAH05048.1"/>
    <property type="molecule type" value="mRNA"/>
</dbReference>
<dbReference type="SMR" id="Q5K2N9"/>
<dbReference type="GO" id="GO:0045095">
    <property type="term" value="C:keratin filament"/>
    <property type="evidence" value="ECO:0007669"/>
    <property type="project" value="TreeGrafter"/>
</dbReference>
<dbReference type="GO" id="GO:0005198">
    <property type="term" value="F:structural molecule activity"/>
    <property type="evidence" value="ECO:0007669"/>
    <property type="project" value="InterPro"/>
</dbReference>
<dbReference type="GO" id="GO:0045104">
    <property type="term" value="P:intermediate filament cytoskeleton organization"/>
    <property type="evidence" value="ECO:0007669"/>
    <property type="project" value="TreeGrafter"/>
</dbReference>
<dbReference type="FunFam" id="1.20.5.1160:FF:000002">
    <property type="entry name" value="Type I keratin 10"/>
    <property type="match status" value="1"/>
</dbReference>
<dbReference type="FunFam" id="1.20.5.170:FF:000002">
    <property type="entry name" value="Type I keratin KA11"/>
    <property type="match status" value="1"/>
</dbReference>
<dbReference type="FunFam" id="1.20.5.500:FF:000001">
    <property type="entry name" value="Type II keratin 23"/>
    <property type="match status" value="1"/>
</dbReference>
<dbReference type="Gene3D" id="1.20.5.170">
    <property type="match status" value="1"/>
</dbReference>
<dbReference type="Gene3D" id="1.20.5.500">
    <property type="entry name" value="Single helix bin"/>
    <property type="match status" value="1"/>
</dbReference>
<dbReference type="Gene3D" id="1.20.5.1160">
    <property type="entry name" value="Vasodilator-stimulated phosphoprotein"/>
    <property type="match status" value="1"/>
</dbReference>
<dbReference type="InterPro" id="IPR039008">
    <property type="entry name" value="IF_rod_dom"/>
</dbReference>
<dbReference type="InterPro" id="IPR002957">
    <property type="entry name" value="Keratin_I"/>
</dbReference>
<dbReference type="PANTHER" id="PTHR23239">
    <property type="entry name" value="INTERMEDIATE FILAMENT"/>
    <property type="match status" value="1"/>
</dbReference>
<dbReference type="PANTHER" id="PTHR23239:SF349">
    <property type="entry name" value="KERATIN, TYPE I CYTOSKELETAL 18"/>
    <property type="match status" value="1"/>
</dbReference>
<dbReference type="Pfam" id="PF00038">
    <property type="entry name" value="Filament"/>
    <property type="match status" value="1"/>
</dbReference>
<dbReference type="PRINTS" id="PR01248">
    <property type="entry name" value="TYPE1KERATIN"/>
</dbReference>
<dbReference type="SMART" id="SM01391">
    <property type="entry name" value="Filament"/>
    <property type="match status" value="1"/>
</dbReference>
<dbReference type="SUPFAM" id="SSF64593">
    <property type="entry name" value="Intermediate filament protein, coiled coil region"/>
    <property type="match status" value="2"/>
</dbReference>
<dbReference type="PROSITE" id="PS51842">
    <property type="entry name" value="IF_ROD_2"/>
    <property type="match status" value="1"/>
</dbReference>
<feature type="initiator methionine" description="Removed" evidence="2">
    <location>
        <position position="1"/>
    </location>
</feature>
<feature type="chain" id="PRO_0000289075" description="Keratin, type I cytoskeletal 18" evidence="2">
    <location>
        <begin position="2"/>
        <end position="438"/>
    </location>
</feature>
<feature type="domain" description="IF rod" evidence="4">
    <location>
        <begin position="84"/>
        <end position="395"/>
    </location>
</feature>
<feature type="region of interest" description="Head" evidence="3">
    <location>
        <begin position="4"/>
        <end position="83"/>
    </location>
</feature>
<feature type="region of interest" description="Coil 1A" evidence="3">
    <location>
        <begin position="84"/>
        <end position="119"/>
    </location>
</feature>
<feature type="region of interest" description="Linker 1" evidence="3">
    <location>
        <begin position="120"/>
        <end position="136"/>
    </location>
</feature>
<feature type="region of interest" description="Coil 1B" evidence="3">
    <location>
        <begin position="137"/>
        <end position="228"/>
    </location>
</feature>
<feature type="region of interest" description="Linker 12" evidence="3">
    <location>
        <begin position="229"/>
        <end position="252"/>
    </location>
</feature>
<feature type="region of interest" description="Coil 2" evidence="3">
    <location>
        <begin position="253"/>
        <end position="393"/>
    </location>
</feature>
<feature type="region of interest" description="Tail" evidence="3">
    <location>
        <begin position="394"/>
        <end position="438"/>
    </location>
</feature>
<feature type="site" description="Cleavage; by caspases" evidence="1">
    <location>
        <begin position="242"/>
        <end position="243"/>
    </location>
</feature>
<feature type="site" description="Stutter" evidence="3">
    <location>
        <position position="335"/>
    </location>
</feature>
<sequence length="438" mass="48990">MYSAVSSRSTVVSSRPLSSSRSLVVSSSYPKMSTASTTYSGVASSGSRISSTRYSTIGSALGGAGGFGTRSSLTLSGNAVISNEKETMQDLNDRLSNYLETVRRLENANQQLEIQIREAMEKRGPSVRDYSNYEKIIKELRDQIYDTTVDNARLVLAIDNARLAADDFRVKWEAELAIRQSVDSDINGLRKVIDDTNLGRLQLESEIEVLKEELVFIKKNHEDEVIALRNQVNSCGVQVDLDAPKGTDLAEIMATLRAEYEAMINKNKDDAEHWYQSKVETFQVETVQNTEALQTAKTELSDLRRRIQSLEIELESNRSMRASLEDTLRDTELRYAMEMERLGALVSRIEAELAQVRTDMQRQAQDYEVLLNAKMKLEAEIATYRHLLGGEDSDTLSLQDALSAMKVSNVQTVQKIVVTTQKLVDGKVVEDSTVTETK</sequence>
<comment type="function">
    <text evidence="1">When phosphorylated, plays a role in filament reorganization.</text>
</comment>
<comment type="subunit">
    <text evidence="1">Heterotetramer of two type I and two type II keratins. Keratin-18 associates with keratin-8 (By similarity).</text>
</comment>
<comment type="tissue specificity">
    <text evidence="5">Expressed at low levels in skin.</text>
</comment>
<comment type="PTM">
    <text evidence="1">Phosphorylated.</text>
</comment>
<comment type="PTM">
    <text evidence="1">Proteolytically cleaved by caspases during epithelial cell apoptosis.</text>
</comment>
<comment type="miscellaneous">
    <text evidence="6">There are two types of cytoskeletal and microfibrillar keratin: I (acidic; 40-55 kDa) and II (neutral to basic; 56-70 kDa).</text>
</comment>
<comment type="similarity">
    <text evidence="4">Belongs to the intermediate filament family.</text>
</comment>
<evidence type="ECO:0000250" key="1"/>
<evidence type="ECO:0000250" key="2">
    <source>
        <dbReference type="UniProtKB" id="P05783"/>
    </source>
</evidence>
<evidence type="ECO:0000255" key="3"/>
<evidence type="ECO:0000255" key="4">
    <source>
        <dbReference type="PROSITE-ProRule" id="PRU01188"/>
    </source>
</evidence>
<evidence type="ECO:0000269" key="5">
    <source>
    </source>
</evidence>
<evidence type="ECO:0000305" key="6"/>
<evidence type="ECO:0000312" key="7">
    <source>
        <dbReference type="EMBL" id="CAH05048.1"/>
    </source>
</evidence>
<reference evidence="6 7" key="1">
    <citation type="journal article" date="2005" name="Eur. J. Cell Biol.">
        <title>Evolution of tissue-specific keratins as deduced from novel cDNA sequences of the lungfish Protopterus aethiopicus.</title>
        <authorList>
            <person name="Schaffeld M."/>
            <person name="Bremer M."/>
            <person name="Hunzinger C."/>
            <person name="Markl J."/>
        </authorList>
    </citation>
    <scope>NUCLEOTIDE SEQUENCE [MRNA]</scope>
    <scope>TISSUE SPECIFICITY</scope>
    <scope>IDENTIFICATION BY MASS SPECTROMETRY</scope>
    <source>
        <tissue evidence="5">Skin</tissue>
    </source>
</reference>
<gene>
    <name evidence="7" type="primary">krt18</name>
</gene>
<name>K1C18_PROAT</name>
<protein>
    <recommendedName>
        <fullName>Keratin, type I cytoskeletal 18</fullName>
    </recommendedName>
    <alternativeName>
        <fullName>Cytokeratin-18</fullName>
        <shortName>CK-18</shortName>
    </alternativeName>
    <alternativeName>
        <fullName>Keratin-18</fullName>
        <shortName>K18</shortName>
    </alternativeName>
</protein>
<accession>Q5K2N9</accession>
<organism>
    <name type="scientific">Protopterus aethiopicus</name>
    <name type="common">Marbled lungfish</name>
    <dbReference type="NCBI Taxonomy" id="7886"/>
    <lineage>
        <taxon>Eukaryota</taxon>
        <taxon>Metazoa</taxon>
        <taxon>Chordata</taxon>
        <taxon>Craniata</taxon>
        <taxon>Vertebrata</taxon>
        <taxon>Euteleostomi</taxon>
        <taxon>Dipnomorpha</taxon>
        <taxon>Ceratodontiformes</taxon>
        <taxon>Lepidosirenoidei</taxon>
        <taxon>Protopteridae</taxon>
        <taxon>Protopterus</taxon>
    </lineage>
</organism>
<proteinExistence type="evidence at protein level"/>
<keyword id="KW-0175">Coiled coil</keyword>
<keyword id="KW-0403">Intermediate filament</keyword>
<keyword id="KW-0416">Keratin</keyword>
<keyword id="KW-0597">Phosphoprotein</keyword>